<organism>
    <name type="scientific">Dictyostelium discoideum</name>
    <name type="common">Social amoeba</name>
    <dbReference type="NCBI Taxonomy" id="44689"/>
    <lineage>
        <taxon>Eukaryota</taxon>
        <taxon>Amoebozoa</taxon>
        <taxon>Evosea</taxon>
        <taxon>Eumycetozoa</taxon>
        <taxon>Dictyostelia</taxon>
        <taxon>Dictyosteliales</taxon>
        <taxon>Dictyosteliaceae</taxon>
        <taxon>Dictyostelium</taxon>
    </lineage>
</organism>
<dbReference type="EC" id="1.14.-.-"/>
<dbReference type="EMBL" id="AAFI02000066">
    <property type="protein sequence ID" value="EAS66862.1"/>
    <property type="molecule type" value="Genomic_DNA"/>
</dbReference>
<dbReference type="RefSeq" id="XP_001134545.1">
    <property type="nucleotide sequence ID" value="XM_001134545.1"/>
</dbReference>
<dbReference type="SMR" id="Q1ZXF5"/>
<dbReference type="FunCoup" id="Q1ZXF5">
    <property type="interactions" value="9"/>
</dbReference>
<dbReference type="STRING" id="44689.Q1ZXF5"/>
<dbReference type="GlyGen" id="Q1ZXF5">
    <property type="glycosylation" value="1 site"/>
</dbReference>
<dbReference type="PaxDb" id="44689-DDB0232355"/>
<dbReference type="EnsemblProtists" id="EAS66862">
    <property type="protein sequence ID" value="EAS66862"/>
    <property type="gene ID" value="DDB_G0284535"/>
</dbReference>
<dbReference type="GeneID" id="8624651"/>
<dbReference type="KEGG" id="ddi:DDB_G0284535"/>
<dbReference type="dictyBase" id="DDB_G0284535">
    <property type="gene designation" value="cyp508A4"/>
</dbReference>
<dbReference type="VEuPathDB" id="AmoebaDB:DDB_G0284535"/>
<dbReference type="eggNOG" id="KOG0156">
    <property type="taxonomic scope" value="Eukaryota"/>
</dbReference>
<dbReference type="HOGENOM" id="CLU_001570_4_0_1"/>
<dbReference type="InParanoid" id="Q1ZXF5"/>
<dbReference type="OMA" id="FHDNFRI"/>
<dbReference type="PhylomeDB" id="Q1ZXF5"/>
<dbReference type="Reactome" id="R-DDI-211935">
    <property type="pathway name" value="Fatty acids"/>
</dbReference>
<dbReference type="Reactome" id="R-DDI-211945">
    <property type="pathway name" value="Phase I - Functionalization of compounds"/>
</dbReference>
<dbReference type="Reactome" id="R-DDI-211958">
    <property type="pathway name" value="Miscellaneous substrates"/>
</dbReference>
<dbReference type="Reactome" id="R-DDI-211981">
    <property type="pathway name" value="Xenobiotics"/>
</dbReference>
<dbReference type="Reactome" id="R-DDI-211999">
    <property type="pathway name" value="CYP2E1 reactions"/>
</dbReference>
<dbReference type="Reactome" id="R-DDI-2142670">
    <property type="pathway name" value="Synthesis of epoxy (EET) and dihydroxyeicosatrienoic acids (DHET)"/>
</dbReference>
<dbReference type="Reactome" id="R-DDI-2142816">
    <property type="pathway name" value="Synthesis of (16-20)-hydroxyeicosatetraenoic acids (HETE)"/>
</dbReference>
<dbReference type="Reactome" id="R-DDI-5423646">
    <property type="pathway name" value="Aflatoxin activation and detoxification"/>
</dbReference>
<dbReference type="Reactome" id="R-DDI-9027307">
    <property type="pathway name" value="Biosynthesis of maresin-like SPMs"/>
</dbReference>
<dbReference type="Reactome" id="R-DDI-9749641">
    <property type="pathway name" value="Aspirin ADME"/>
</dbReference>
<dbReference type="Reactome" id="R-DDI-9753281">
    <property type="pathway name" value="Paracetamol ADME"/>
</dbReference>
<dbReference type="PRO" id="PR:Q1ZXF5"/>
<dbReference type="Proteomes" id="UP000002195">
    <property type="component" value="Chromosome 4"/>
</dbReference>
<dbReference type="GO" id="GO:0016020">
    <property type="term" value="C:membrane"/>
    <property type="evidence" value="ECO:0007669"/>
    <property type="project" value="UniProtKB-SubCell"/>
</dbReference>
<dbReference type="GO" id="GO:0020037">
    <property type="term" value="F:heme binding"/>
    <property type="evidence" value="ECO:0007669"/>
    <property type="project" value="InterPro"/>
</dbReference>
<dbReference type="GO" id="GO:0005506">
    <property type="term" value="F:iron ion binding"/>
    <property type="evidence" value="ECO:0007669"/>
    <property type="project" value="InterPro"/>
</dbReference>
<dbReference type="GO" id="GO:0004497">
    <property type="term" value="F:monooxygenase activity"/>
    <property type="evidence" value="ECO:0007669"/>
    <property type="project" value="UniProtKB-KW"/>
</dbReference>
<dbReference type="GO" id="GO:0016705">
    <property type="term" value="F:oxidoreductase activity, acting on paired donors, with incorporation or reduction of molecular oxygen"/>
    <property type="evidence" value="ECO:0007669"/>
    <property type="project" value="InterPro"/>
</dbReference>
<dbReference type="CDD" id="cd20617">
    <property type="entry name" value="CYP1_2-like"/>
    <property type="match status" value="1"/>
</dbReference>
<dbReference type="FunFam" id="1.10.630.10:FF:000068">
    <property type="entry name" value="Probable cytochrome P450 508A2"/>
    <property type="match status" value="1"/>
</dbReference>
<dbReference type="Gene3D" id="1.10.630.10">
    <property type="entry name" value="Cytochrome P450"/>
    <property type="match status" value="1"/>
</dbReference>
<dbReference type="InterPro" id="IPR001128">
    <property type="entry name" value="Cyt_P450"/>
</dbReference>
<dbReference type="InterPro" id="IPR017972">
    <property type="entry name" value="Cyt_P450_CS"/>
</dbReference>
<dbReference type="InterPro" id="IPR002401">
    <property type="entry name" value="Cyt_P450_E_grp-I"/>
</dbReference>
<dbReference type="InterPro" id="IPR036396">
    <property type="entry name" value="Cyt_P450_sf"/>
</dbReference>
<dbReference type="InterPro" id="IPR050182">
    <property type="entry name" value="Cytochrome_P450_fam2"/>
</dbReference>
<dbReference type="PANTHER" id="PTHR24300">
    <property type="entry name" value="CYTOCHROME P450 508A4-RELATED"/>
    <property type="match status" value="1"/>
</dbReference>
<dbReference type="PANTHER" id="PTHR24300:SF363">
    <property type="entry name" value="CYTOCHROME P450 508A4-RELATED"/>
    <property type="match status" value="1"/>
</dbReference>
<dbReference type="Pfam" id="PF00067">
    <property type="entry name" value="p450"/>
    <property type="match status" value="1"/>
</dbReference>
<dbReference type="PRINTS" id="PR00463">
    <property type="entry name" value="EP450I"/>
</dbReference>
<dbReference type="PRINTS" id="PR00385">
    <property type="entry name" value="P450"/>
</dbReference>
<dbReference type="SUPFAM" id="SSF48264">
    <property type="entry name" value="Cytochrome P450"/>
    <property type="match status" value="1"/>
</dbReference>
<dbReference type="PROSITE" id="PS00086">
    <property type="entry name" value="CYTOCHROME_P450"/>
    <property type="match status" value="1"/>
</dbReference>
<evidence type="ECO:0000250" key="1"/>
<evidence type="ECO:0000255" key="2"/>
<evidence type="ECO:0000305" key="3"/>
<accession>Q1ZXF5</accession>
<reference key="1">
    <citation type="journal article" date="2005" name="Nature">
        <title>The genome of the social amoeba Dictyostelium discoideum.</title>
        <authorList>
            <person name="Eichinger L."/>
            <person name="Pachebat J.A."/>
            <person name="Gloeckner G."/>
            <person name="Rajandream M.A."/>
            <person name="Sucgang R."/>
            <person name="Berriman M."/>
            <person name="Song J."/>
            <person name="Olsen R."/>
            <person name="Szafranski K."/>
            <person name="Xu Q."/>
            <person name="Tunggal B."/>
            <person name="Kummerfeld S."/>
            <person name="Madera M."/>
            <person name="Konfortov B.A."/>
            <person name="Rivero F."/>
            <person name="Bankier A.T."/>
            <person name="Lehmann R."/>
            <person name="Hamlin N."/>
            <person name="Davies R."/>
            <person name="Gaudet P."/>
            <person name="Fey P."/>
            <person name="Pilcher K."/>
            <person name="Chen G."/>
            <person name="Saunders D."/>
            <person name="Sodergren E.J."/>
            <person name="Davis P."/>
            <person name="Kerhornou A."/>
            <person name="Nie X."/>
            <person name="Hall N."/>
            <person name="Anjard C."/>
            <person name="Hemphill L."/>
            <person name="Bason N."/>
            <person name="Farbrother P."/>
            <person name="Desany B."/>
            <person name="Just E."/>
            <person name="Morio T."/>
            <person name="Rost R."/>
            <person name="Churcher C.M."/>
            <person name="Cooper J."/>
            <person name="Haydock S."/>
            <person name="van Driessche N."/>
            <person name="Cronin A."/>
            <person name="Goodhead I."/>
            <person name="Muzny D.M."/>
            <person name="Mourier T."/>
            <person name="Pain A."/>
            <person name="Lu M."/>
            <person name="Harper D."/>
            <person name="Lindsay R."/>
            <person name="Hauser H."/>
            <person name="James K.D."/>
            <person name="Quiles M."/>
            <person name="Madan Babu M."/>
            <person name="Saito T."/>
            <person name="Buchrieser C."/>
            <person name="Wardroper A."/>
            <person name="Felder M."/>
            <person name="Thangavelu M."/>
            <person name="Johnson D."/>
            <person name="Knights A."/>
            <person name="Loulseged H."/>
            <person name="Mungall K.L."/>
            <person name="Oliver K."/>
            <person name="Price C."/>
            <person name="Quail M.A."/>
            <person name="Urushihara H."/>
            <person name="Hernandez J."/>
            <person name="Rabbinowitsch E."/>
            <person name="Steffen D."/>
            <person name="Sanders M."/>
            <person name="Ma J."/>
            <person name="Kohara Y."/>
            <person name="Sharp S."/>
            <person name="Simmonds M.N."/>
            <person name="Spiegler S."/>
            <person name="Tivey A."/>
            <person name="Sugano S."/>
            <person name="White B."/>
            <person name="Walker D."/>
            <person name="Woodward J.R."/>
            <person name="Winckler T."/>
            <person name="Tanaka Y."/>
            <person name="Shaulsky G."/>
            <person name="Schleicher M."/>
            <person name="Weinstock G.M."/>
            <person name="Rosenthal A."/>
            <person name="Cox E.C."/>
            <person name="Chisholm R.L."/>
            <person name="Gibbs R.A."/>
            <person name="Loomis W.F."/>
            <person name="Platzer M."/>
            <person name="Kay R.R."/>
            <person name="Williams J.G."/>
            <person name="Dear P.H."/>
            <person name="Noegel A.A."/>
            <person name="Barrell B.G."/>
            <person name="Kuspa A."/>
        </authorList>
    </citation>
    <scope>NUCLEOTIDE SEQUENCE [LARGE SCALE GENOMIC DNA]</scope>
    <source>
        <strain>AX4</strain>
    </source>
</reference>
<keyword id="KW-0349">Heme</keyword>
<keyword id="KW-0408">Iron</keyword>
<keyword id="KW-0472">Membrane</keyword>
<keyword id="KW-0479">Metal-binding</keyword>
<keyword id="KW-0503">Monooxygenase</keyword>
<keyword id="KW-0560">Oxidoreductase</keyword>
<keyword id="KW-1185">Reference proteome</keyword>
<keyword id="KW-0812">Transmembrane</keyword>
<keyword id="KW-1133">Transmembrane helix</keyword>
<comment type="cofactor">
    <cofactor evidence="1">
        <name>heme</name>
        <dbReference type="ChEBI" id="CHEBI:30413"/>
    </cofactor>
</comment>
<comment type="subcellular location">
    <subcellularLocation>
        <location evidence="3">Membrane</location>
        <topology evidence="3">Single-pass membrane protein</topology>
    </subcellularLocation>
</comment>
<comment type="similarity">
    <text evidence="3">Belongs to the cytochrome P450 family.</text>
</comment>
<name>C5084_DICDI</name>
<sequence length="501" mass="58200">MIMLIKVFVLLLVVYILHNSYKKYKKLDKNELKGPTPIPVLGNLHQLSSLPHRDLSKMTKDYGDIFRVWFADLYTVVISDPVLIRKIYVENHESFRDRPKIPSMKYGTYYHGTAASMGEDWVRNRGIVSSAMRKSNIKHIYEVINNQVDVLMSTMKKYEKRSEPFEPRYYMTKYTMAAMFKYIFNEDIGEDEDIHTGEIQKIMGPMNQVMEDFGTGSLFDVLEISQTFYLKWLELTEKNFPLLLKFFNGRYEQHLETIKPESPRDLLDILINEYGTNTHDDYLNIASTVLDFFFAGTDTSSTTLEYLFLMMANYPEIQDKVHQEVKSYLKQIGKDKVELNDRQSLPYVVAVIKETLRFKPVTPFGVPRSCVNEITIDEKYFIPKGAQVIINYPSIFENEKYFKNANQFDPSRFLQTTTTNTASNEESSFNSNLAFIPFSIGPRNCVGMQFAQDELFLAFANIVLNFTIKSVDGKKIDETISYGVTLKPKTRFKVLLEKRLI</sequence>
<feature type="chain" id="PRO_0000318809" description="Probable cytochrome P450 508A4">
    <location>
        <begin position="1"/>
        <end position="501"/>
    </location>
</feature>
<feature type="transmembrane region" description="Helical" evidence="2">
    <location>
        <begin position="1"/>
        <end position="21"/>
    </location>
</feature>
<feature type="binding site" description="axial binding residue" evidence="1">
    <location>
        <position position="445"/>
    </location>
    <ligand>
        <name>heme</name>
        <dbReference type="ChEBI" id="CHEBI:30413"/>
    </ligand>
    <ligandPart>
        <name>Fe</name>
        <dbReference type="ChEBI" id="CHEBI:18248"/>
    </ligandPart>
</feature>
<protein>
    <recommendedName>
        <fullName>Probable cytochrome P450 508A4</fullName>
        <ecNumber>1.14.-.-</ecNumber>
    </recommendedName>
</protein>
<proteinExistence type="inferred from homology"/>
<gene>
    <name type="primary">cyp508A4</name>
    <name type="ORF">DDB_G0284535</name>
</gene>